<sequence>MAETFLFTSESVNEGHPDKLCDQISDAVLDACLEQDPESKVACETCTKTNLVMVFGEITTKANVDYEKIVRDTCRNIGFISNDVGLDADNCKVLVNIEQQSPDIAQGVHGHLTKRPEEIGAGDQGHMFGYATDETPELMPLSHVLATKLGARLTEVRKNGTCSWLRPDGKTQVTVEYYNDKGAMVPVRVHTVLISTQHDETVTNDEIAADLKEHVIKPVIPEKYLDEKTIFHLNPSGRFVIGGPHGDAGLTGRKIIIDTYGGWGAHGGGAFSGKDPTKVDRSGAYIVRQAAKSIVASELARRCIVQVSYAIGVPEPLSVFVDTYGTGKIPDKEILKIVKENFDFRPGMISINLDLKRGGNSRFLKTAAYGHFGREDPDFTWEVVKPLKWEKA</sequence>
<reference key="1">
    <citation type="journal article" date="2002" name="Plant J.">
        <title>Herbivore-induced volatiles induce the emission of ethylene in neighboring lima bean plants.</title>
        <authorList>
            <person name="Arimura G."/>
            <person name="Ozawa R."/>
            <person name="Nishioka T."/>
            <person name="Boland W."/>
            <person name="Koch T."/>
            <person name="Kuehnemann F."/>
            <person name="Takabayashi J."/>
        </authorList>
    </citation>
    <scope>NUCLEOTIDE SEQUENCE [MRNA]</scope>
    <scope>INDUCTION</scope>
</reference>
<feature type="chain" id="PRO_0000363036" description="S-adenosylmethionine synthase">
    <location>
        <begin position="1"/>
        <end position="392"/>
    </location>
</feature>
<feature type="binding site" evidence="3">
    <location>
        <position position="10"/>
    </location>
    <ligand>
        <name>Mg(2+)</name>
        <dbReference type="ChEBI" id="CHEBI:18420"/>
    </ligand>
</feature>
<feature type="binding site" description="in other chain" evidence="4">
    <location>
        <position position="16"/>
    </location>
    <ligand>
        <name>ATP</name>
        <dbReference type="ChEBI" id="CHEBI:30616"/>
        <note>ligand shared between two neighboring subunits</note>
    </ligand>
</feature>
<feature type="binding site" evidence="2">
    <location>
        <position position="44"/>
    </location>
    <ligand>
        <name>K(+)</name>
        <dbReference type="ChEBI" id="CHEBI:29103"/>
    </ligand>
</feature>
<feature type="binding site" description="in other chain" evidence="2">
    <location>
        <position position="57"/>
    </location>
    <ligand>
        <name>L-methionine</name>
        <dbReference type="ChEBI" id="CHEBI:57844"/>
        <note>ligand shared between two neighboring subunits</note>
    </ligand>
</feature>
<feature type="binding site" description="in other chain" evidence="2">
    <location>
        <position position="100"/>
    </location>
    <ligand>
        <name>L-methionine</name>
        <dbReference type="ChEBI" id="CHEBI:57844"/>
        <note>ligand shared between two neighboring subunits</note>
    </ligand>
</feature>
<feature type="binding site" description="in other chain" evidence="4">
    <location>
        <begin position="168"/>
        <end position="170"/>
    </location>
    <ligand>
        <name>ATP</name>
        <dbReference type="ChEBI" id="CHEBI:30616"/>
        <note>ligand shared between two neighboring subunits</note>
    </ligand>
</feature>
<feature type="binding site" description="in other chain" evidence="4">
    <location>
        <begin position="236"/>
        <end position="239"/>
    </location>
    <ligand>
        <name>ATP</name>
        <dbReference type="ChEBI" id="CHEBI:30616"/>
        <note>ligand shared between two neighboring subunits</note>
    </ligand>
</feature>
<feature type="binding site" description="in other chain" evidence="4">
    <location>
        <position position="247"/>
    </location>
    <ligand>
        <name>ATP</name>
        <dbReference type="ChEBI" id="CHEBI:30616"/>
        <note>ligand shared between two neighboring subunits</note>
    </ligand>
</feature>
<feature type="binding site" evidence="2">
    <location>
        <position position="247"/>
    </location>
    <ligand>
        <name>L-methionine</name>
        <dbReference type="ChEBI" id="CHEBI:57844"/>
        <note>ligand shared between two neighboring subunits</note>
    </ligand>
</feature>
<feature type="binding site" description="in other chain" evidence="2">
    <location>
        <begin position="253"/>
        <end position="254"/>
    </location>
    <ligand>
        <name>ATP</name>
        <dbReference type="ChEBI" id="CHEBI:30616"/>
        <note>ligand shared between two neighboring subunits</note>
    </ligand>
</feature>
<feature type="binding site" evidence="2">
    <location>
        <position position="270"/>
    </location>
    <ligand>
        <name>ATP</name>
        <dbReference type="ChEBI" id="CHEBI:30616"/>
        <note>ligand shared between two neighboring subunits</note>
    </ligand>
</feature>
<feature type="binding site" evidence="2">
    <location>
        <position position="274"/>
    </location>
    <ligand>
        <name>ATP</name>
        <dbReference type="ChEBI" id="CHEBI:30616"/>
        <note>ligand shared between two neighboring subunits</note>
    </ligand>
</feature>
<feature type="binding site" evidence="3">
    <location>
        <position position="278"/>
    </location>
    <ligand>
        <name>ATP</name>
        <dbReference type="ChEBI" id="CHEBI:30616"/>
        <note>ligand shared between two neighboring subunits</note>
    </ligand>
</feature>
<feature type="binding site" description="in other chain" evidence="2">
    <location>
        <position position="278"/>
    </location>
    <ligand>
        <name>L-methionine</name>
        <dbReference type="ChEBI" id="CHEBI:57844"/>
        <note>ligand shared between two neighboring subunits</note>
    </ligand>
</feature>
<accession>Q8W3Y4</accession>
<keyword id="KW-0067">ATP-binding</keyword>
<keyword id="KW-0170">Cobalt</keyword>
<keyword id="KW-0963">Cytoplasm</keyword>
<keyword id="KW-0460">Magnesium</keyword>
<keyword id="KW-0479">Metal-binding</keyword>
<keyword id="KW-0547">Nucleotide-binding</keyword>
<keyword id="KW-0554">One-carbon metabolism</keyword>
<keyword id="KW-0630">Potassium</keyword>
<keyword id="KW-0808">Transferase</keyword>
<proteinExistence type="evidence at transcript level"/>
<protein>
    <recommendedName>
        <fullName>S-adenosylmethionine synthase</fullName>
        <shortName>AdoMet synthase</shortName>
        <ecNumber evidence="5">2.5.1.6</ecNumber>
    </recommendedName>
    <alternativeName>
        <fullName>Methionine adenosyltransferase</fullName>
        <shortName>MAT</shortName>
    </alternativeName>
</protein>
<dbReference type="EC" id="2.5.1.6" evidence="5"/>
<dbReference type="EMBL" id="AB062358">
    <property type="protein sequence ID" value="BAB83761.1"/>
    <property type="molecule type" value="mRNA"/>
</dbReference>
<dbReference type="SMR" id="Q8W3Y4"/>
<dbReference type="UniPathway" id="UPA00315">
    <property type="reaction ID" value="UER00080"/>
</dbReference>
<dbReference type="GO" id="GO:0005737">
    <property type="term" value="C:cytoplasm"/>
    <property type="evidence" value="ECO:0007669"/>
    <property type="project" value="UniProtKB-SubCell"/>
</dbReference>
<dbReference type="GO" id="GO:0005524">
    <property type="term" value="F:ATP binding"/>
    <property type="evidence" value="ECO:0007669"/>
    <property type="project" value="UniProtKB-KW"/>
</dbReference>
<dbReference type="GO" id="GO:0046872">
    <property type="term" value="F:metal ion binding"/>
    <property type="evidence" value="ECO:0007669"/>
    <property type="project" value="UniProtKB-KW"/>
</dbReference>
<dbReference type="GO" id="GO:0004478">
    <property type="term" value="F:methionine adenosyltransferase activity"/>
    <property type="evidence" value="ECO:0007669"/>
    <property type="project" value="UniProtKB-EC"/>
</dbReference>
<dbReference type="GO" id="GO:0006730">
    <property type="term" value="P:one-carbon metabolic process"/>
    <property type="evidence" value="ECO:0007669"/>
    <property type="project" value="UniProtKB-KW"/>
</dbReference>
<dbReference type="GO" id="GO:0006556">
    <property type="term" value="P:S-adenosylmethionine biosynthetic process"/>
    <property type="evidence" value="ECO:0007669"/>
    <property type="project" value="UniProtKB-UniPathway"/>
</dbReference>
<dbReference type="CDD" id="cd18079">
    <property type="entry name" value="S-AdoMet_synt"/>
    <property type="match status" value="1"/>
</dbReference>
<dbReference type="FunFam" id="3.30.300.10:FF:000003">
    <property type="entry name" value="S-adenosylmethionine synthase"/>
    <property type="match status" value="1"/>
</dbReference>
<dbReference type="FunFam" id="3.30.300.10:FF:000004">
    <property type="entry name" value="S-adenosylmethionine synthase"/>
    <property type="match status" value="1"/>
</dbReference>
<dbReference type="FunFam" id="3.30.300.10:FF:000011">
    <property type="entry name" value="S-adenosylmethionine synthase"/>
    <property type="match status" value="1"/>
</dbReference>
<dbReference type="FunFam" id="3.30.300.10:FF:000021">
    <property type="entry name" value="S-adenosylmethionine synthetase 1"/>
    <property type="match status" value="1"/>
</dbReference>
<dbReference type="Gene3D" id="3.30.300.10">
    <property type="match status" value="3"/>
</dbReference>
<dbReference type="HAMAP" id="MF_00086">
    <property type="entry name" value="S_AdoMet_synth1"/>
    <property type="match status" value="1"/>
</dbReference>
<dbReference type="InterPro" id="IPR022631">
    <property type="entry name" value="ADOMET_SYNTHASE_CS"/>
</dbReference>
<dbReference type="InterPro" id="IPR022630">
    <property type="entry name" value="S-AdoMet_synt_C"/>
</dbReference>
<dbReference type="InterPro" id="IPR022629">
    <property type="entry name" value="S-AdoMet_synt_central"/>
</dbReference>
<dbReference type="InterPro" id="IPR022628">
    <property type="entry name" value="S-AdoMet_synt_N"/>
</dbReference>
<dbReference type="InterPro" id="IPR002133">
    <property type="entry name" value="S-AdoMet_synthetase"/>
</dbReference>
<dbReference type="InterPro" id="IPR022636">
    <property type="entry name" value="S-AdoMet_synthetase_sfam"/>
</dbReference>
<dbReference type="NCBIfam" id="TIGR01034">
    <property type="entry name" value="metK"/>
    <property type="match status" value="1"/>
</dbReference>
<dbReference type="PANTHER" id="PTHR11964">
    <property type="entry name" value="S-ADENOSYLMETHIONINE SYNTHETASE"/>
    <property type="match status" value="1"/>
</dbReference>
<dbReference type="Pfam" id="PF02773">
    <property type="entry name" value="S-AdoMet_synt_C"/>
    <property type="match status" value="1"/>
</dbReference>
<dbReference type="Pfam" id="PF02772">
    <property type="entry name" value="S-AdoMet_synt_M"/>
    <property type="match status" value="1"/>
</dbReference>
<dbReference type="Pfam" id="PF00438">
    <property type="entry name" value="S-AdoMet_synt_N"/>
    <property type="match status" value="1"/>
</dbReference>
<dbReference type="PIRSF" id="PIRSF000497">
    <property type="entry name" value="MAT"/>
    <property type="match status" value="1"/>
</dbReference>
<dbReference type="SUPFAM" id="SSF55973">
    <property type="entry name" value="S-adenosylmethionine synthetase"/>
    <property type="match status" value="3"/>
</dbReference>
<dbReference type="PROSITE" id="PS00376">
    <property type="entry name" value="ADOMET_SYNTHASE_1"/>
    <property type="match status" value="1"/>
</dbReference>
<dbReference type="PROSITE" id="PS00377">
    <property type="entry name" value="ADOMET_SYNTHASE_2"/>
    <property type="match status" value="1"/>
</dbReference>
<organism>
    <name type="scientific">Phaseolus lunatus</name>
    <name type="common">Lima bean</name>
    <name type="synonym">Phaseolus limensis</name>
    <dbReference type="NCBI Taxonomy" id="3884"/>
    <lineage>
        <taxon>Eukaryota</taxon>
        <taxon>Viridiplantae</taxon>
        <taxon>Streptophyta</taxon>
        <taxon>Embryophyta</taxon>
        <taxon>Tracheophyta</taxon>
        <taxon>Spermatophyta</taxon>
        <taxon>Magnoliopsida</taxon>
        <taxon>eudicotyledons</taxon>
        <taxon>Gunneridae</taxon>
        <taxon>Pentapetalae</taxon>
        <taxon>rosids</taxon>
        <taxon>fabids</taxon>
        <taxon>Fabales</taxon>
        <taxon>Fabaceae</taxon>
        <taxon>Papilionoideae</taxon>
        <taxon>50 kb inversion clade</taxon>
        <taxon>NPAAA clade</taxon>
        <taxon>indigoferoid/millettioid clade</taxon>
        <taxon>Phaseoleae</taxon>
        <taxon>Phaseolus</taxon>
    </lineage>
</organism>
<comment type="function">
    <text evidence="5">Catalyzes the formation of S-adenosylmethionine from methionine and ATP. The reaction comprises two steps that are both catalyzed by the same enzyme: formation of S-adenosylmethionine (AdoMet) and triphosphate, and subsequent hydrolysis of the triphosphate.</text>
</comment>
<comment type="catalytic activity">
    <reaction evidence="5">
        <text>L-methionine + ATP + H2O = S-adenosyl-L-methionine + phosphate + diphosphate</text>
        <dbReference type="Rhea" id="RHEA:21080"/>
        <dbReference type="ChEBI" id="CHEBI:15377"/>
        <dbReference type="ChEBI" id="CHEBI:30616"/>
        <dbReference type="ChEBI" id="CHEBI:33019"/>
        <dbReference type="ChEBI" id="CHEBI:43474"/>
        <dbReference type="ChEBI" id="CHEBI:57844"/>
        <dbReference type="ChEBI" id="CHEBI:59789"/>
        <dbReference type="EC" id="2.5.1.6"/>
    </reaction>
</comment>
<comment type="cofactor">
    <cofactor evidence="5">
        <name>Mn(2+)</name>
        <dbReference type="ChEBI" id="CHEBI:29035"/>
    </cofactor>
    <cofactor evidence="5">
        <name>Mg(2+)</name>
        <dbReference type="ChEBI" id="CHEBI:18420"/>
    </cofactor>
    <cofactor evidence="5">
        <name>Co(2+)</name>
        <dbReference type="ChEBI" id="CHEBI:48828"/>
    </cofactor>
    <text evidence="3 5">Binds 2 divalent ions per subunit. The metal ions interact primarily with the substrate (By similarity). Can utilize magnesium, manganese or cobalt (in vitro) (By similarity).</text>
</comment>
<comment type="cofactor">
    <cofactor evidence="5">
        <name>K(+)</name>
        <dbReference type="ChEBI" id="CHEBI:29103"/>
    </cofactor>
    <text evidence="3">Binds 1 potassium ion per subunit. The potassium ion interacts primarily with the substrate (By similarity).</text>
</comment>
<comment type="pathway">
    <text evidence="5">Amino-acid biosynthesis; S-adenosyl-L-methionine biosynthesis; S-adenosyl-L-methionine from L-methionine: step 1/1.</text>
</comment>
<comment type="subunit">
    <text evidence="1">Homotetramer.</text>
</comment>
<comment type="subcellular location">
    <subcellularLocation>
        <location evidence="1">Cytoplasm</location>
    </subcellularLocation>
</comment>
<comment type="induction">
    <text evidence="6">By Tetranychus urticae-induced volatiles, T.urticae infestation, ethylene, jasmonic acid (JA), salicylic acid (SA), and wounding.</text>
</comment>
<comment type="similarity">
    <text evidence="7">Belongs to the AdoMet synthase family.</text>
</comment>
<gene>
    <name type="primary">SAMS</name>
</gene>
<evidence type="ECO:0000250" key="1"/>
<evidence type="ECO:0000250" key="2">
    <source>
        <dbReference type="UniProtKB" id="P0A817"/>
    </source>
</evidence>
<evidence type="ECO:0000250" key="3">
    <source>
        <dbReference type="UniProtKB" id="P13444"/>
    </source>
</evidence>
<evidence type="ECO:0000250" key="4">
    <source>
        <dbReference type="UniProtKB" id="Q00266"/>
    </source>
</evidence>
<evidence type="ECO:0000250" key="5">
    <source>
        <dbReference type="UniProtKB" id="Q96551"/>
    </source>
</evidence>
<evidence type="ECO:0000269" key="6">
    <source>
    </source>
</evidence>
<evidence type="ECO:0000305" key="7"/>
<name>METK_PHALU</name>